<gene>
    <name type="ordered locus">TK1026</name>
</gene>
<name>GGGPS_THEKO</name>
<protein>
    <recommendedName>
        <fullName evidence="1">Geranylgeranylglyceryl phosphate synthase</fullName>
        <shortName evidence="1">GGGP synthase</shortName>
        <shortName evidence="1">GGGPS</shortName>
        <ecNumber evidence="1 3">2.5.1.41</ecNumber>
    </recommendedName>
    <alternativeName>
        <fullName evidence="1">(S)-3-O-geranylgeranylglyceryl phosphate synthase</fullName>
    </alternativeName>
    <alternativeName>
        <fullName evidence="1">Phosphoglycerol geranylgeranyltransferase</fullName>
    </alternativeName>
</protein>
<sequence>MLKLGKVETYIHEKLEREKLHFVLLDPDDVSPELAGELASMSEEVGVDAIMVGGSTGAEGEVLDSVVRAIKESSNLPVILFPGSHGGISKYADAIFFMSLLNSRNPFFITGAQALGAFQVKRYGIEPIPMAYLIIEPGETVGWVGDAKPIPRHKPKIAAAYALAGQYLGMRLVYLEAGSGAPQPVPPEMIGLVKRVIDVPLIVGGGIRTEEQARAAVKAGADIIVTGTAIEKAGSVEKAREKLEELNRGVKG</sequence>
<evidence type="ECO:0000255" key="1">
    <source>
        <dbReference type="HAMAP-Rule" id="MF_00112"/>
    </source>
</evidence>
<evidence type="ECO:0000269" key="2">
    <source>
    </source>
</evidence>
<evidence type="ECO:0000269" key="3">
    <source>
    </source>
</evidence>
<comment type="function">
    <text evidence="1 3">Prenyltransferase that catalyzes the transfer of the geranylgeranyl moiety of geranylgeranyl diphosphate (GGPP) to the C3 hydroxyl of sn-glycerol-1-phosphate (G1P). This reaction is the first ether-bond-formation step in the biosynthesis of archaeal membrane lipids.</text>
</comment>
<comment type="catalytic activity">
    <reaction evidence="1 3">
        <text>sn-glycerol 1-phosphate + (2E,6E,10E)-geranylgeranyl diphosphate = sn-3-O-(geranylgeranyl)glycerol 1-phosphate + diphosphate</text>
        <dbReference type="Rhea" id="RHEA:23404"/>
        <dbReference type="ChEBI" id="CHEBI:33019"/>
        <dbReference type="ChEBI" id="CHEBI:57677"/>
        <dbReference type="ChEBI" id="CHEBI:57685"/>
        <dbReference type="ChEBI" id="CHEBI:58756"/>
        <dbReference type="EC" id="2.5.1.41"/>
    </reaction>
</comment>
<comment type="cofactor">
    <cofactor evidence="1">
        <name>Mg(2+)</name>
        <dbReference type="ChEBI" id="CHEBI:18420"/>
    </cofactor>
</comment>
<comment type="pathway">
    <text evidence="1">Membrane lipid metabolism; glycerophospholipid metabolism.</text>
</comment>
<comment type="subunit">
    <text evidence="2 3">Homotetramer (PubMed:21761520). Homohexamer (PubMed:24684232).</text>
</comment>
<comment type="subcellular location">
    <subcellularLocation>
        <location evidence="1">Cytoplasm</location>
    </subcellularLocation>
</comment>
<comment type="similarity">
    <text evidence="1">Belongs to the GGGP/HepGP synthase family. Group II subfamily.</text>
</comment>
<reference key="1">
    <citation type="journal article" date="2005" name="Genome Res.">
        <title>Complete genome sequence of the hyperthermophilic archaeon Thermococcus kodakaraensis KOD1 and comparison with Pyrococcus genomes.</title>
        <authorList>
            <person name="Fukui T."/>
            <person name="Atomi H."/>
            <person name="Kanai T."/>
            <person name="Matsumi R."/>
            <person name="Fujiwara S."/>
            <person name="Imanaka T."/>
        </authorList>
    </citation>
    <scope>NUCLEOTIDE SEQUENCE [LARGE SCALE GENOMIC DNA]</scope>
    <source>
        <strain>ATCC BAA-918 / JCM 12380 / KOD1</strain>
    </source>
</reference>
<reference key="2">
    <citation type="journal article" date="2011" name="Angew. Chem. Int. Ed. Engl.">
        <title>Functional assignment of an enzyme that catalyzes the synthesis of an archaea-type ether lipid in bacteria.</title>
        <authorList>
            <person name="Guldan H."/>
            <person name="Matysik F.M."/>
            <person name="Bocola M."/>
            <person name="Sterner R."/>
            <person name="Babinger P."/>
        </authorList>
    </citation>
    <scope>SUBUNIT</scope>
</reference>
<reference key="3">
    <citation type="journal article" date="2014" name="Mol. Microbiol.">
        <title>A comprehensive analysis of the geranylgeranylglyceryl phosphate synthase enzyme family identifies novel members and reveals mechanisms of substrate specificity and quaternary structure organization.</title>
        <authorList>
            <person name="Peterhoff D."/>
            <person name="Beer B."/>
            <person name="Rajendran C."/>
            <person name="Kumpula E.P."/>
            <person name="Kapetaniou E."/>
            <person name="Guldan H."/>
            <person name="Wierenga R.K."/>
            <person name="Sterner R."/>
            <person name="Babinger P."/>
        </authorList>
    </citation>
    <scope>FUNCTION</scope>
    <scope>CATALYTIC ACTIVITY</scope>
    <scope>SUBUNIT</scope>
    <scope>MUTAGENESIS OF TRP-143</scope>
</reference>
<accession>Q5JDY1</accession>
<organism>
    <name type="scientific">Thermococcus kodakarensis (strain ATCC BAA-918 / JCM 12380 / KOD1)</name>
    <name type="common">Pyrococcus kodakaraensis (strain KOD1)</name>
    <dbReference type="NCBI Taxonomy" id="69014"/>
    <lineage>
        <taxon>Archaea</taxon>
        <taxon>Methanobacteriati</taxon>
        <taxon>Methanobacteriota</taxon>
        <taxon>Thermococci</taxon>
        <taxon>Thermococcales</taxon>
        <taxon>Thermococcaceae</taxon>
        <taxon>Thermococcus</taxon>
    </lineage>
</organism>
<feature type="chain" id="PRO_0000138742" description="Geranylgeranylglyceryl phosphate synthase">
    <location>
        <begin position="1"/>
        <end position="252"/>
    </location>
</feature>
<feature type="binding site" evidence="1">
    <location>
        <position position="26"/>
    </location>
    <ligand>
        <name>Mg(2+)</name>
        <dbReference type="ChEBI" id="CHEBI:18420"/>
    </ligand>
</feature>
<feature type="binding site" evidence="1">
    <location>
        <position position="55"/>
    </location>
    <ligand>
        <name>Mg(2+)</name>
        <dbReference type="ChEBI" id="CHEBI:18420"/>
    </ligand>
</feature>
<feature type="binding site" evidence="1">
    <location>
        <begin position="174"/>
        <end position="180"/>
    </location>
    <ligand>
        <name>sn-glycerol 1-phosphate</name>
        <dbReference type="ChEBI" id="CHEBI:57685"/>
    </ligand>
</feature>
<feature type="binding site" evidence="1">
    <location>
        <begin position="205"/>
        <end position="206"/>
    </location>
    <ligand>
        <name>sn-glycerol 1-phosphate</name>
        <dbReference type="ChEBI" id="CHEBI:57685"/>
    </ligand>
</feature>
<feature type="binding site" evidence="1">
    <location>
        <begin position="227"/>
        <end position="228"/>
    </location>
    <ligand>
        <name>sn-glycerol 1-phosphate</name>
        <dbReference type="ChEBI" id="CHEBI:57685"/>
    </ligand>
</feature>
<feature type="mutagenesis site" description="Forms homodimers. Shows almost wild-type activity." evidence="3">
    <original>W</original>
    <variation>A</variation>
    <location>
        <position position="143"/>
    </location>
</feature>
<dbReference type="EC" id="2.5.1.41" evidence="1 3"/>
<dbReference type="EMBL" id="AP006878">
    <property type="protein sequence ID" value="BAD85215.1"/>
    <property type="molecule type" value="Genomic_DNA"/>
</dbReference>
<dbReference type="RefSeq" id="WP_011249977.1">
    <property type="nucleotide sequence ID" value="NC_006624.1"/>
</dbReference>
<dbReference type="SMR" id="Q5JDY1"/>
<dbReference type="FunCoup" id="Q5JDY1">
    <property type="interactions" value="1"/>
</dbReference>
<dbReference type="STRING" id="69014.TK1026"/>
<dbReference type="EnsemblBacteria" id="BAD85215">
    <property type="protein sequence ID" value="BAD85215"/>
    <property type="gene ID" value="TK1026"/>
</dbReference>
<dbReference type="GeneID" id="78447539"/>
<dbReference type="KEGG" id="tko:TK1026"/>
<dbReference type="PATRIC" id="fig|69014.16.peg.1004"/>
<dbReference type="eggNOG" id="arCOG01085">
    <property type="taxonomic scope" value="Archaea"/>
</dbReference>
<dbReference type="HOGENOM" id="CLU_068610_0_0_2"/>
<dbReference type="InParanoid" id="Q5JDY1"/>
<dbReference type="OrthoDB" id="7409at2157"/>
<dbReference type="PhylomeDB" id="Q5JDY1"/>
<dbReference type="UniPathway" id="UPA00940"/>
<dbReference type="Proteomes" id="UP000000536">
    <property type="component" value="Chromosome"/>
</dbReference>
<dbReference type="GO" id="GO:0005737">
    <property type="term" value="C:cytoplasm"/>
    <property type="evidence" value="ECO:0007669"/>
    <property type="project" value="UniProtKB-SubCell"/>
</dbReference>
<dbReference type="GO" id="GO:0000107">
    <property type="term" value="F:imidazoleglycerol-phosphate synthase activity"/>
    <property type="evidence" value="ECO:0000318"/>
    <property type="project" value="GO_Central"/>
</dbReference>
<dbReference type="GO" id="GO:0000287">
    <property type="term" value="F:magnesium ion binding"/>
    <property type="evidence" value="ECO:0007669"/>
    <property type="project" value="UniProtKB-UniRule"/>
</dbReference>
<dbReference type="GO" id="GO:0047294">
    <property type="term" value="F:phosphoglycerol geranylgeranyltransferase activity"/>
    <property type="evidence" value="ECO:0007669"/>
    <property type="project" value="UniProtKB-UniRule"/>
</dbReference>
<dbReference type="GO" id="GO:0046474">
    <property type="term" value="P:glycerophospholipid biosynthetic process"/>
    <property type="evidence" value="ECO:0007669"/>
    <property type="project" value="UniProtKB-UniRule"/>
</dbReference>
<dbReference type="CDD" id="cd02812">
    <property type="entry name" value="PcrB_like"/>
    <property type="match status" value="1"/>
</dbReference>
<dbReference type="FunFam" id="3.20.20.390:FF:000001">
    <property type="entry name" value="Heptaprenylglyceryl phosphate synthase"/>
    <property type="match status" value="1"/>
</dbReference>
<dbReference type="Gene3D" id="3.20.20.390">
    <property type="entry name" value="FMN-linked oxidoreductases"/>
    <property type="match status" value="1"/>
</dbReference>
<dbReference type="HAMAP" id="MF_00112">
    <property type="entry name" value="GGGP_HepGP_synthase"/>
    <property type="match status" value="1"/>
</dbReference>
<dbReference type="InterPro" id="IPR038597">
    <property type="entry name" value="GGGP/HepGP_synthase_sf"/>
</dbReference>
<dbReference type="InterPro" id="IPR008205">
    <property type="entry name" value="GGGP_HepGP_synthase"/>
</dbReference>
<dbReference type="InterPro" id="IPR010946">
    <property type="entry name" value="GGGP_synth"/>
</dbReference>
<dbReference type="InterPro" id="IPR050064">
    <property type="entry name" value="IGPS_HisA/HisF"/>
</dbReference>
<dbReference type="NCBIfam" id="TIGR01769">
    <property type="entry name" value="GGGP"/>
    <property type="match status" value="1"/>
</dbReference>
<dbReference type="NCBIfam" id="TIGR01768">
    <property type="entry name" value="GGGP-family"/>
    <property type="match status" value="1"/>
</dbReference>
<dbReference type="NCBIfam" id="NF003198">
    <property type="entry name" value="PRK04169.1-2"/>
    <property type="match status" value="1"/>
</dbReference>
<dbReference type="PANTHER" id="PTHR21235:SF22">
    <property type="entry name" value="GERANYLGERANYLGLYCERYL PHOSPHATE SYNTHASE"/>
    <property type="match status" value="1"/>
</dbReference>
<dbReference type="PANTHER" id="PTHR21235">
    <property type="entry name" value="IMIDAZOLE GLYCEROL PHOSPHATE SYNTHASE SUBUNIT HISF/H IGP SYNTHASE SUBUNIT HISF/H"/>
    <property type="match status" value="1"/>
</dbReference>
<dbReference type="Pfam" id="PF01884">
    <property type="entry name" value="PcrB"/>
    <property type="match status" value="1"/>
</dbReference>
<dbReference type="SUPFAM" id="SSF51395">
    <property type="entry name" value="FMN-linked oxidoreductases"/>
    <property type="match status" value="1"/>
</dbReference>
<keyword id="KW-0963">Cytoplasm</keyword>
<keyword id="KW-0444">Lipid biosynthesis</keyword>
<keyword id="KW-0443">Lipid metabolism</keyword>
<keyword id="KW-0460">Magnesium</keyword>
<keyword id="KW-0479">Metal-binding</keyword>
<keyword id="KW-0594">Phospholipid biosynthesis</keyword>
<keyword id="KW-1208">Phospholipid metabolism</keyword>
<keyword id="KW-1185">Reference proteome</keyword>
<keyword id="KW-0808">Transferase</keyword>
<proteinExistence type="evidence at protein level"/>